<accession>Q83GI1</accession>
<reference key="1">
    <citation type="journal article" date="2003" name="Genome Res.">
        <title>Tropheryma whipplei twist: a human pathogenic Actinobacteria with a reduced genome.</title>
        <authorList>
            <person name="Raoult D."/>
            <person name="Ogata H."/>
            <person name="Audic S."/>
            <person name="Robert C."/>
            <person name="Suhre K."/>
            <person name="Drancourt M."/>
            <person name="Claverie J.-M."/>
        </authorList>
    </citation>
    <scope>NUCLEOTIDE SEQUENCE [LARGE SCALE GENOMIC DNA]</scope>
    <source>
        <strain>Twist</strain>
    </source>
</reference>
<organism>
    <name type="scientific">Tropheryma whipplei (strain Twist)</name>
    <name type="common">Whipple's bacillus</name>
    <dbReference type="NCBI Taxonomy" id="203267"/>
    <lineage>
        <taxon>Bacteria</taxon>
        <taxon>Bacillati</taxon>
        <taxon>Actinomycetota</taxon>
        <taxon>Actinomycetes</taxon>
        <taxon>Micrococcales</taxon>
        <taxon>Tropherymataceae</taxon>
        <taxon>Tropheryma</taxon>
    </lineage>
</organism>
<protein>
    <recommendedName>
        <fullName evidence="1">Triosephosphate isomerase</fullName>
        <shortName evidence="1">TIM</shortName>
        <shortName evidence="1">TPI</shortName>
        <ecNumber evidence="1">5.3.1.1</ecNumber>
    </recommendedName>
    <alternativeName>
        <fullName evidence="1">Triose-phosphate isomerase</fullName>
    </alternativeName>
</protein>
<proteinExistence type="inferred from homology"/>
<keyword id="KW-0963">Cytoplasm</keyword>
<keyword id="KW-0312">Gluconeogenesis</keyword>
<keyword id="KW-0324">Glycolysis</keyword>
<keyword id="KW-0413">Isomerase</keyword>
<keyword id="KW-1185">Reference proteome</keyword>
<comment type="function">
    <text evidence="1">Involved in the gluconeogenesis. Catalyzes stereospecifically the conversion of dihydroxyacetone phosphate (DHAP) to D-glyceraldehyde-3-phosphate (G3P).</text>
</comment>
<comment type="catalytic activity">
    <reaction evidence="1">
        <text>D-glyceraldehyde 3-phosphate = dihydroxyacetone phosphate</text>
        <dbReference type="Rhea" id="RHEA:18585"/>
        <dbReference type="ChEBI" id="CHEBI:57642"/>
        <dbReference type="ChEBI" id="CHEBI:59776"/>
        <dbReference type="EC" id="5.3.1.1"/>
    </reaction>
</comment>
<comment type="pathway">
    <text evidence="1">Carbohydrate biosynthesis; gluconeogenesis.</text>
</comment>
<comment type="pathway">
    <text evidence="1">Carbohydrate degradation; glycolysis; D-glyceraldehyde 3-phosphate from glycerone phosphate: step 1/1.</text>
</comment>
<comment type="subunit">
    <text evidence="1">Homodimer.</text>
</comment>
<comment type="subcellular location">
    <subcellularLocation>
        <location evidence="1">Cytoplasm</location>
    </subcellularLocation>
</comment>
<comment type="similarity">
    <text evidence="1">Belongs to the triosephosphate isomerase family.</text>
</comment>
<sequence length="293" mass="31858">MLPKRAYPVQDSNVHSQEKKIIAGNWKMNINHSQAVSYLQELNWRLIDNGHDFDSCEIAVFPPFTDLRSVQTLVASDDIQISYGAQDVSAFSDGAHTGQISAQFLKDLDCKYVLIGHSEQRCLPCYPGNNSAINELNNKHDGLIANKLLRSFAAGICPILCIGDISPGDHFDATLSRFRSVLSHLKAISDKKHSIGYALGSKTHFLDSDQLHMLVAYEPSSAINSGNCANSGDIVRMAAAIKDIVNVRVLYGGGVNLFNASAVFNEDLLDGILVGRASLNASDFASLIKTCCL</sequence>
<gene>
    <name evidence="1" type="primary">tpiA</name>
    <name type="synonym">tpi</name>
    <name type="ordered locus">TWT_302</name>
</gene>
<evidence type="ECO:0000255" key="1">
    <source>
        <dbReference type="HAMAP-Rule" id="MF_00147"/>
    </source>
</evidence>
<dbReference type="EC" id="5.3.1.1" evidence="1"/>
<dbReference type="EMBL" id="AE014184">
    <property type="protein sequence ID" value="AAO44399.1"/>
    <property type="molecule type" value="Genomic_DNA"/>
</dbReference>
<dbReference type="RefSeq" id="WP_011102491.1">
    <property type="nucleotide sequence ID" value="NC_004572.3"/>
</dbReference>
<dbReference type="SMR" id="Q83GI1"/>
<dbReference type="STRING" id="203267.TWT_302"/>
<dbReference type="KEGG" id="twh:TWT_302"/>
<dbReference type="eggNOG" id="COG0149">
    <property type="taxonomic scope" value="Bacteria"/>
</dbReference>
<dbReference type="HOGENOM" id="CLU_024251_2_3_11"/>
<dbReference type="OrthoDB" id="9809429at2"/>
<dbReference type="UniPathway" id="UPA00109">
    <property type="reaction ID" value="UER00189"/>
</dbReference>
<dbReference type="UniPathway" id="UPA00138"/>
<dbReference type="Proteomes" id="UP000002200">
    <property type="component" value="Chromosome"/>
</dbReference>
<dbReference type="GO" id="GO:0005829">
    <property type="term" value="C:cytosol"/>
    <property type="evidence" value="ECO:0007669"/>
    <property type="project" value="TreeGrafter"/>
</dbReference>
<dbReference type="GO" id="GO:0004807">
    <property type="term" value="F:triose-phosphate isomerase activity"/>
    <property type="evidence" value="ECO:0007669"/>
    <property type="project" value="UniProtKB-UniRule"/>
</dbReference>
<dbReference type="GO" id="GO:0006094">
    <property type="term" value="P:gluconeogenesis"/>
    <property type="evidence" value="ECO:0007669"/>
    <property type="project" value="UniProtKB-UniRule"/>
</dbReference>
<dbReference type="GO" id="GO:0046166">
    <property type="term" value="P:glyceraldehyde-3-phosphate biosynthetic process"/>
    <property type="evidence" value="ECO:0007669"/>
    <property type="project" value="TreeGrafter"/>
</dbReference>
<dbReference type="GO" id="GO:0019563">
    <property type="term" value="P:glycerol catabolic process"/>
    <property type="evidence" value="ECO:0007669"/>
    <property type="project" value="TreeGrafter"/>
</dbReference>
<dbReference type="GO" id="GO:0006096">
    <property type="term" value="P:glycolytic process"/>
    <property type="evidence" value="ECO:0007669"/>
    <property type="project" value="UniProtKB-UniRule"/>
</dbReference>
<dbReference type="CDD" id="cd00311">
    <property type="entry name" value="TIM"/>
    <property type="match status" value="1"/>
</dbReference>
<dbReference type="Gene3D" id="3.20.20.70">
    <property type="entry name" value="Aldolase class I"/>
    <property type="match status" value="1"/>
</dbReference>
<dbReference type="HAMAP" id="MF_00147_B">
    <property type="entry name" value="TIM_B"/>
    <property type="match status" value="1"/>
</dbReference>
<dbReference type="InterPro" id="IPR013785">
    <property type="entry name" value="Aldolase_TIM"/>
</dbReference>
<dbReference type="InterPro" id="IPR035990">
    <property type="entry name" value="TIM_sf"/>
</dbReference>
<dbReference type="InterPro" id="IPR022896">
    <property type="entry name" value="TrioseP_Isoase_bac/euk"/>
</dbReference>
<dbReference type="InterPro" id="IPR000652">
    <property type="entry name" value="Triosephosphate_isomerase"/>
</dbReference>
<dbReference type="InterPro" id="IPR020861">
    <property type="entry name" value="Triosephosphate_isomerase_AS"/>
</dbReference>
<dbReference type="PANTHER" id="PTHR21139">
    <property type="entry name" value="TRIOSEPHOSPHATE ISOMERASE"/>
    <property type="match status" value="1"/>
</dbReference>
<dbReference type="PANTHER" id="PTHR21139:SF42">
    <property type="entry name" value="TRIOSEPHOSPHATE ISOMERASE"/>
    <property type="match status" value="1"/>
</dbReference>
<dbReference type="Pfam" id="PF00121">
    <property type="entry name" value="TIM"/>
    <property type="match status" value="1"/>
</dbReference>
<dbReference type="SUPFAM" id="SSF51351">
    <property type="entry name" value="Triosephosphate isomerase (TIM)"/>
    <property type="match status" value="1"/>
</dbReference>
<dbReference type="PROSITE" id="PS00171">
    <property type="entry name" value="TIM_1"/>
    <property type="match status" value="1"/>
</dbReference>
<dbReference type="PROSITE" id="PS51440">
    <property type="entry name" value="TIM_2"/>
    <property type="match status" value="1"/>
</dbReference>
<feature type="chain" id="PRO_0000090310" description="Triosephosphate isomerase">
    <location>
        <begin position="1"/>
        <end position="293"/>
    </location>
</feature>
<feature type="active site" description="Electrophile" evidence="1">
    <location>
        <position position="117"/>
    </location>
</feature>
<feature type="active site" description="Proton acceptor" evidence="1">
    <location>
        <position position="218"/>
    </location>
</feature>
<feature type="binding site" evidence="1">
    <location>
        <begin position="25"/>
        <end position="27"/>
    </location>
    <ligand>
        <name>substrate</name>
    </ligand>
</feature>
<name>TPIS_TROWT</name>